<name>RL1_RALPJ</name>
<protein>
    <recommendedName>
        <fullName evidence="1">Large ribosomal subunit protein uL1</fullName>
    </recommendedName>
    <alternativeName>
        <fullName evidence="2">50S ribosomal protein L1</fullName>
    </alternativeName>
</protein>
<dbReference type="EMBL" id="CP001068">
    <property type="protein sequence ID" value="ACD28439.1"/>
    <property type="molecule type" value="Genomic_DNA"/>
</dbReference>
<dbReference type="SMR" id="B2UF70"/>
<dbReference type="STRING" id="402626.Rpic_3317"/>
<dbReference type="KEGG" id="rpi:Rpic_3317"/>
<dbReference type="eggNOG" id="COG0081">
    <property type="taxonomic scope" value="Bacteria"/>
</dbReference>
<dbReference type="HOGENOM" id="CLU_062853_0_0_4"/>
<dbReference type="GO" id="GO:0022625">
    <property type="term" value="C:cytosolic large ribosomal subunit"/>
    <property type="evidence" value="ECO:0007669"/>
    <property type="project" value="TreeGrafter"/>
</dbReference>
<dbReference type="GO" id="GO:0019843">
    <property type="term" value="F:rRNA binding"/>
    <property type="evidence" value="ECO:0007669"/>
    <property type="project" value="UniProtKB-UniRule"/>
</dbReference>
<dbReference type="GO" id="GO:0003735">
    <property type="term" value="F:structural constituent of ribosome"/>
    <property type="evidence" value="ECO:0007669"/>
    <property type="project" value="InterPro"/>
</dbReference>
<dbReference type="GO" id="GO:0000049">
    <property type="term" value="F:tRNA binding"/>
    <property type="evidence" value="ECO:0007669"/>
    <property type="project" value="UniProtKB-KW"/>
</dbReference>
<dbReference type="GO" id="GO:0006417">
    <property type="term" value="P:regulation of translation"/>
    <property type="evidence" value="ECO:0007669"/>
    <property type="project" value="UniProtKB-KW"/>
</dbReference>
<dbReference type="GO" id="GO:0006412">
    <property type="term" value="P:translation"/>
    <property type="evidence" value="ECO:0007669"/>
    <property type="project" value="UniProtKB-UniRule"/>
</dbReference>
<dbReference type="CDD" id="cd00403">
    <property type="entry name" value="Ribosomal_L1"/>
    <property type="match status" value="1"/>
</dbReference>
<dbReference type="FunFam" id="3.40.50.790:FF:000001">
    <property type="entry name" value="50S ribosomal protein L1"/>
    <property type="match status" value="1"/>
</dbReference>
<dbReference type="Gene3D" id="3.30.190.20">
    <property type="match status" value="1"/>
</dbReference>
<dbReference type="Gene3D" id="3.40.50.790">
    <property type="match status" value="1"/>
</dbReference>
<dbReference type="HAMAP" id="MF_01318_B">
    <property type="entry name" value="Ribosomal_uL1_B"/>
    <property type="match status" value="1"/>
</dbReference>
<dbReference type="InterPro" id="IPR005878">
    <property type="entry name" value="Ribosom_uL1_bac-type"/>
</dbReference>
<dbReference type="InterPro" id="IPR002143">
    <property type="entry name" value="Ribosomal_uL1"/>
</dbReference>
<dbReference type="InterPro" id="IPR023674">
    <property type="entry name" value="Ribosomal_uL1-like"/>
</dbReference>
<dbReference type="InterPro" id="IPR028364">
    <property type="entry name" value="Ribosomal_uL1/biogenesis"/>
</dbReference>
<dbReference type="InterPro" id="IPR016095">
    <property type="entry name" value="Ribosomal_uL1_3-a/b-sand"/>
</dbReference>
<dbReference type="InterPro" id="IPR023673">
    <property type="entry name" value="Ribosomal_uL1_CS"/>
</dbReference>
<dbReference type="NCBIfam" id="TIGR01169">
    <property type="entry name" value="rplA_bact"/>
    <property type="match status" value="1"/>
</dbReference>
<dbReference type="PANTHER" id="PTHR36427">
    <property type="entry name" value="54S RIBOSOMAL PROTEIN L1, MITOCHONDRIAL"/>
    <property type="match status" value="1"/>
</dbReference>
<dbReference type="PANTHER" id="PTHR36427:SF3">
    <property type="entry name" value="LARGE RIBOSOMAL SUBUNIT PROTEIN UL1M"/>
    <property type="match status" value="1"/>
</dbReference>
<dbReference type="Pfam" id="PF00687">
    <property type="entry name" value="Ribosomal_L1"/>
    <property type="match status" value="1"/>
</dbReference>
<dbReference type="PIRSF" id="PIRSF002155">
    <property type="entry name" value="Ribosomal_L1"/>
    <property type="match status" value="1"/>
</dbReference>
<dbReference type="SUPFAM" id="SSF56808">
    <property type="entry name" value="Ribosomal protein L1"/>
    <property type="match status" value="1"/>
</dbReference>
<dbReference type="PROSITE" id="PS01199">
    <property type="entry name" value="RIBOSOMAL_L1"/>
    <property type="match status" value="1"/>
</dbReference>
<evidence type="ECO:0000255" key="1">
    <source>
        <dbReference type="HAMAP-Rule" id="MF_01318"/>
    </source>
</evidence>
<evidence type="ECO:0000305" key="2"/>
<sequence length="231" mass="24012">MAKISKRAAANKAKVERTKFYPIDEALSLVKECASAKFDESIDVAVQLGIDAKKSDQVVRGSVVLPAGTGKSVRVAVFAQGDKAEQAKAAGAEIVGMEDLAEQIKAGKMDFDVVIASPDTMRVVGTLGQILGPRGLMPNPKVGTVTPDVATAVKNAKAGQVQFRVDKAGIIHATIGRRSFEPAALKSNLAALLDALTKAKPASSKGVYLRKVAVSSTMGVGVRVDQATLAA</sequence>
<reference key="1">
    <citation type="submission" date="2008-05" db="EMBL/GenBank/DDBJ databases">
        <title>Complete sequence of chromosome 1 of Ralstonia pickettii 12J.</title>
        <authorList>
            <person name="Lucas S."/>
            <person name="Copeland A."/>
            <person name="Lapidus A."/>
            <person name="Glavina del Rio T."/>
            <person name="Dalin E."/>
            <person name="Tice H."/>
            <person name="Bruce D."/>
            <person name="Goodwin L."/>
            <person name="Pitluck S."/>
            <person name="Meincke L."/>
            <person name="Brettin T."/>
            <person name="Detter J.C."/>
            <person name="Han C."/>
            <person name="Kuske C.R."/>
            <person name="Schmutz J."/>
            <person name="Larimer F."/>
            <person name="Land M."/>
            <person name="Hauser L."/>
            <person name="Kyrpides N."/>
            <person name="Mikhailova N."/>
            <person name="Marsh T."/>
            <person name="Richardson P."/>
        </authorList>
    </citation>
    <scope>NUCLEOTIDE SEQUENCE [LARGE SCALE GENOMIC DNA]</scope>
    <source>
        <strain>12J</strain>
    </source>
</reference>
<organism>
    <name type="scientific">Ralstonia pickettii (strain 12J)</name>
    <dbReference type="NCBI Taxonomy" id="402626"/>
    <lineage>
        <taxon>Bacteria</taxon>
        <taxon>Pseudomonadati</taxon>
        <taxon>Pseudomonadota</taxon>
        <taxon>Betaproteobacteria</taxon>
        <taxon>Burkholderiales</taxon>
        <taxon>Burkholderiaceae</taxon>
        <taxon>Ralstonia</taxon>
    </lineage>
</organism>
<proteinExistence type="inferred from homology"/>
<gene>
    <name evidence="1" type="primary">rplA</name>
    <name type="ordered locus">Rpic_3317</name>
</gene>
<feature type="chain" id="PRO_1000141447" description="Large ribosomal subunit protein uL1">
    <location>
        <begin position="1"/>
        <end position="231"/>
    </location>
</feature>
<comment type="function">
    <text evidence="1">Binds directly to 23S rRNA. The L1 stalk is quite mobile in the ribosome, and is involved in E site tRNA release.</text>
</comment>
<comment type="function">
    <text evidence="1">Protein L1 is also a translational repressor protein, it controls the translation of the L11 operon by binding to its mRNA.</text>
</comment>
<comment type="subunit">
    <text evidence="1">Part of the 50S ribosomal subunit.</text>
</comment>
<comment type="similarity">
    <text evidence="1">Belongs to the universal ribosomal protein uL1 family.</text>
</comment>
<keyword id="KW-0678">Repressor</keyword>
<keyword id="KW-0687">Ribonucleoprotein</keyword>
<keyword id="KW-0689">Ribosomal protein</keyword>
<keyword id="KW-0694">RNA-binding</keyword>
<keyword id="KW-0699">rRNA-binding</keyword>
<keyword id="KW-0810">Translation regulation</keyword>
<keyword id="KW-0820">tRNA-binding</keyword>
<accession>B2UF70</accession>